<keyword id="KW-0687">Ribonucleoprotein</keyword>
<keyword id="KW-0689">Ribosomal protein</keyword>
<reference key="1">
    <citation type="journal article" date="2008" name="Genome Res.">
        <title>Genome sequence of the beta-rhizobium Cupriavidus taiwanensis and comparative genomics of rhizobia.</title>
        <authorList>
            <person name="Amadou C."/>
            <person name="Pascal G."/>
            <person name="Mangenot S."/>
            <person name="Glew M."/>
            <person name="Bontemps C."/>
            <person name="Capela D."/>
            <person name="Carrere S."/>
            <person name="Cruveiller S."/>
            <person name="Dossat C."/>
            <person name="Lajus A."/>
            <person name="Marchetti M."/>
            <person name="Poinsot V."/>
            <person name="Rouy Z."/>
            <person name="Servin B."/>
            <person name="Saad M."/>
            <person name="Schenowitz C."/>
            <person name="Barbe V."/>
            <person name="Batut J."/>
            <person name="Medigue C."/>
            <person name="Masson-Boivin C."/>
        </authorList>
    </citation>
    <scope>NUCLEOTIDE SEQUENCE [LARGE SCALE GENOMIC DNA]</scope>
    <source>
        <strain>DSM 17343 / BCRC 17206 / CCUG 44338 / CIP 107171 / LMG 19424 / R1</strain>
    </source>
</reference>
<accession>B3R7R5</accession>
<dbReference type="EMBL" id="CU633749">
    <property type="protein sequence ID" value="CAQ70860.1"/>
    <property type="molecule type" value="Genomic_DNA"/>
</dbReference>
<dbReference type="RefSeq" id="WP_008642937.1">
    <property type="nucleotide sequence ID" value="NC_010528.1"/>
</dbReference>
<dbReference type="SMR" id="B3R7R5"/>
<dbReference type="GeneID" id="92818451"/>
<dbReference type="KEGG" id="cti:RALTA_A2935"/>
<dbReference type="eggNOG" id="COG0255">
    <property type="taxonomic scope" value="Bacteria"/>
</dbReference>
<dbReference type="HOGENOM" id="CLU_158491_1_1_4"/>
<dbReference type="BioCyc" id="CTAI977880:RALTA_RS14315-MONOMER"/>
<dbReference type="Proteomes" id="UP000001692">
    <property type="component" value="Chromosome 1"/>
</dbReference>
<dbReference type="GO" id="GO:0022625">
    <property type="term" value="C:cytosolic large ribosomal subunit"/>
    <property type="evidence" value="ECO:0007669"/>
    <property type="project" value="TreeGrafter"/>
</dbReference>
<dbReference type="GO" id="GO:0003735">
    <property type="term" value="F:structural constituent of ribosome"/>
    <property type="evidence" value="ECO:0007669"/>
    <property type="project" value="InterPro"/>
</dbReference>
<dbReference type="GO" id="GO:0006412">
    <property type="term" value="P:translation"/>
    <property type="evidence" value="ECO:0007669"/>
    <property type="project" value="UniProtKB-UniRule"/>
</dbReference>
<dbReference type="CDD" id="cd00427">
    <property type="entry name" value="Ribosomal_L29_HIP"/>
    <property type="match status" value="1"/>
</dbReference>
<dbReference type="FunFam" id="1.10.287.310:FF:000001">
    <property type="entry name" value="50S ribosomal protein L29"/>
    <property type="match status" value="1"/>
</dbReference>
<dbReference type="Gene3D" id="1.10.287.310">
    <property type="match status" value="1"/>
</dbReference>
<dbReference type="HAMAP" id="MF_00374">
    <property type="entry name" value="Ribosomal_uL29"/>
    <property type="match status" value="1"/>
</dbReference>
<dbReference type="InterPro" id="IPR050063">
    <property type="entry name" value="Ribosomal_protein_uL29"/>
</dbReference>
<dbReference type="InterPro" id="IPR001854">
    <property type="entry name" value="Ribosomal_uL29"/>
</dbReference>
<dbReference type="InterPro" id="IPR018254">
    <property type="entry name" value="Ribosomal_uL29_CS"/>
</dbReference>
<dbReference type="InterPro" id="IPR036049">
    <property type="entry name" value="Ribosomal_uL29_sf"/>
</dbReference>
<dbReference type="NCBIfam" id="TIGR00012">
    <property type="entry name" value="L29"/>
    <property type="match status" value="1"/>
</dbReference>
<dbReference type="PANTHER" id="PTHR10916">
    <property type="entry name" value="60S RIBOSOMAL PROTEIN L35/50S RIBOSOMAL PROTEIN L29"/>
    <property type="match status" value="1"/>
</dbReference>
<dbReference type="PANTHER" id="PTHR10916:SF0">
    <property type="entry name" value="LARGE RIBOSOMAL SUBUNIT PROTEIN UL29C"/>
    <property type="match status" value="1"/>
</dbReference>
<dbReference type="Pfam" id="PF00831">
    <property type="entry name" value="Ribosomal_L29"/>
    <property type="match status" value="1"/>
</dbReference>
<dbReference type="SUPFAM" id="SSF46561">
    <property type="entry name" value="Ribosomal protein L29 (L29p)"/>
    <property type="match status" value="1"/>
</dbReference>
<dbReference type="PROSITE" id="PS00579">
    <property type="entry name" value="RIBOSOMAL_L29"/>
    <property type="match status" value="1"/>
</dbReference>
<protein>
    <recommendedName>
        <fullName evidence="1">Large ribosomal subunit protein uL29</fullName>
    </recommendedName>
    <alternativeName>
        <fullName evidence="2">50S ribosomal protein L29</fullName>
    </alternativeName>
</protein>
<gene>
    <name evidence="1" type="primary">rpmC</name>
    <name type="ordered locus">RALTA_A2935</name>
</gene>
<feature type="chain" id="PRO_1000121756" description="Large ribosomal subunit protein uL29">
    <location>
        <begin position="1"/>
        <end position="64"/>
    </location>
</feature>
<sequence length="64" mass="7184">MKASELRGKDAAGLNQELSELLKAQFSLRMQKATQQLQNTSQLKKVRKDIARVQTVLTEKANAK</sequence>
<name>RL29_CUPTR</name>
<evidence type="ECO:0000255" key="1">
    <source>
        <dbReference type="HAMAP-Rule" id="MF_00374"/>
    </source>
</evidence>
<evidence type="ECO:0000305" key="2"/>
<proteinExistence type="inferred from homology"/>
<organism>
    <name type="scientific">Cupriavidus taiwanensis (strain DSM 17343 / BCRC 17206 / CCUG 44338 / CIP 107171 / LMG 19424 / R1)</name>
    <name type="common">Ralstonia taiwanensis (strain LMG 19424)</name>
    <dbReference type="NCBI Taxonomy" id="977880"/>
    <lineage>
        <taxon>Bacteria</taxon>
        <taxon>Pseudomonadati</taxon>
        <taxon>Pseudomonadota</taxon>
        <taxon>Betaproteobacteria</taxon>
        <taxon>Burkholderiales</taxon>
        <taxon>Burkholderiaceae</taxon>
        <taxon>Cupriavidus</taxon>
    </lineage>
</organism>
<comment type="similarity">
    <text evidence="1">Belongs to the universal ribosomal protein uL29 family.</text>
</comment>